<keyword id="KW-0963">Cytoplasm</keyword>
<keyword id="KW-0448">Lipopolysaccharide biosynthesis</keyword>
<keyword id="KW-0548">Nucleotidyltransferase</keyword>
<keyword id="KW-0808">Transferase</keyword>
<reference key="1">
    <citation type="submission" date="2006-05" db="EMBL/GenBank/DDBJ databases">
        <title>Complete sequence of chromosome 1 of Burkholderia cenocepacia AU 1054.</title>
        <authorList>
            <consortium name="US DOE Joint Genome Institute"/>
            <person name="Copeland A."/>
            <person name="Lucas S."/>
            <person name="Lapidus A."/>
            <person name="Barry K."/>
            <person name="Detter J.C."/>
            <person name="Glavina del Rio T."/>
            <person name="Hammon N."/>
            <person name="Israni S."/>
            <person name="Dalin E."/>
            <person name="Tice H."/>
            <person name="Pitluck S."/>
            <person name="Chain P."/>
            <person name="Malfatti S."/>
            <person name="Shin M."/>
            <person name="Vergez L."/>
            <person name="Schmutz J."/>
            <person name="Larimer F."/>
            <person name="Land M."/>
            <person name="Hauser L."/>
            <person name="Kyrpides N."/>
            <person name="Lykidis A."/>
            <person name="LiPuma J.J."/>
            <person name="Konstantinidis K."/>
            <person name="Tiedje J.M."/>
            <person name="Richardson P."/>
        </authorList>
    </citation>
    <scope>NUCLEOTIDE SEQUENCE [LARGE SCALE GENOMIC DNA]</scope>
    <source>
        <strain>AU 1054</strain>
    </source>
</reference>
<sequence>MTHPPPFIAVIPARLASTRLPNKPLADLGGKPMVVRVAERAREAGAQQVLVASDAQSVLDAARDHGFEAVLTRADHPSGTDRLAEVAAAFGWRDDTVVVNVQGDEPLIDPVLVRDVASHLAAHPACAIATAAHPIHDAADVFNPNVVKVALDAQSVALYFSRAPIPWSRDAYQPHWPDVAAMPAPAFPVYRHIGLYAYRARFLRTYPSLAQAPIEQAEQLEQLRALWHGERIAVLITESAPEAGIDTPADLARVQALFQPGSK</sequence>
<dbReference type="EC" id="2.7.7.38" evidence="1"/>
<dbReference type="EMBL" id="CP000378">
    <property type="protein sequence ID" value="ABF76838.1"/>
    <property type="molecule type" value="Genomic_DNA"/>
</dbReference>
<dbReference type="SMR" id="Q1BU67"/>
<dbReference type="HOGENOM" id="CLU_065038_1_0_4"/>
<dbReference type="UniPathway" id="UPA00030"/>
<dbReference type="UniPathway" id="UPA00358">
    <property type="reaction ID" value="UER00476"/>
</dbReference>
<dbReference type="GO" id="GO:0005829">
    <property type="term" value="C:cytosol"/>
    <property type="evidence" value="ECO:0007669"/>
    <property type="project" value="TreeGrafter"/>
</dbReference>
<dbReference type="GO" id="GO:0008690">
    <property type="term" value="F:3-deoxy-manno-octulosonate cytidylyltransferase activity"/>
    <property type="evidence" value="ECO:0007669"/>
    <property type="project" value="UniProtKB-UniRule"/>
</dbReference>
<dbReference type="GO" id="GO:0033468">
    <property type="term" value="P:CMP-keto-3-deoxy-D-manno-octulosonic acid biosynthetic process"/>
    <property type="evidence" value="ECO:0007669"/>
    <property type="project" value="UniProtKB-UniRule"/>
</dbReference>
<dbReference type="GO" id="GO:0009103">
    <property type="term" value="P:lipopolysaccharide biosynthetic process"/>
    <property type="evidence" value="ECO:0007669"/>
    <property type="project" value="UniProtKB-UniRule"/>
</dbReference>
<dbReference type="CDD" id="cd02517">
    <property type="entry name" value="CMP-KDO-Synthetase"/>
    <property type="match status" value="1"/>
</dbReference>
<dbReference type="FunFam" id="3.90.550.10:FF:000011">
    <property type="entry name" value="3-deoxy-manno-octulosonate cytidylyltransferase"/>
    <property type="match status" value="1"/>
</dbReference>
<dbReference type="Gene3D" id="3.90.550.10">
    <property type="entry name" value="Spore Coat Polysaccharide Biosynthesis Protein SpsA, Chain A"/>
    <property type="match status" value="1"/>
</dbReference>
<dbReference type="HAMAP" id="MF_00057">
    <property type="entry name" value="KdsB"/>
    <property type="match status" value="1"/>
</dbReference>
<dbReference type="InterPro" id="IPR003329">
    <property type="entry name" value="Cytidylyl_trans"/>
</dbReference>
<dbReference type="InterPro" id="IPR004528">
    <property type="entry name" value="KdsB"/>
</dbReference>
<dbReference type="InterPro" id="IPR029044">
    <property type="entry name" value="Nucleotide-diphossugar_trans"/>
</dbReference>
<dbReference type="NCBIfam" id="TIGR00466">
    <property type="entry name" value="kdsB"/>
    <property type="match status" value="1"/>
</dbReference>
<dbReference type="NCBIfam" id="NF003952">
    <property type="entry name" value="PRK05450.1-5"/>
    <property type="match status" value="1"/>
</dbReference>
<dbReference type="NCBIfam" id="NF009905">
    <property type="entry name" value="PRK13368.1"/>
    <property type="match status" value="1"/>
</dbReference>
<dbReference type="PANTHER" id="PTHR42866">
    <property type="entry name" value="3-DEOXY-MANNO-OCTULOSONATE CYTIDYLYLTRANSFERASE"/>
    <property type="match status" value="1"/>
</dbReference>
<dbReference type="PANTHER" id="PTHR42866:SF2">
    <property type="entry name" value="3-DEOXY-MANNO-OCTULOSONATE CYTIDYLYLTRANSFERASE, MITOCHONDRIAL"/>
    <property type="match status" value="1"/>
</dbReference>
<dbReference type="Pfam" id="PF02348">
    <property type="entry name" value="CTP_transf_3"/>
    <property type="match status" value="1"/>
</dbReference>
<dbReference type="SUPFAM" id="SSF53448">
    <property type="entry name" value="Nucleotide-diphospho-sugar transferases"/>
    <property type="match status" value="1"/>
</dbReference>
<organism>
    <name type="scientific">Burkholderia orbicola (strain AU 1054)</name>
    <dbReference type="NCBI Taxonomy" id="331271"/>
    <lineage>
        <taxon>Bacteria</taxon>
        <taxon>Pseudomonadati</taxon>
        <taxon>Pseudomonadota</taxon>
        <taxon>Betaproteobacteria</taxon>
        <taxon>Burkholderiales</taxon>
        <taxon>Burkholderiaceae</taxon>
        <taxon>Burkholderia</taxon>
        <taxon>Burkholderia cepacia complex</taxon>
        <taxon>Burkholderia orbicola</taxon>
    </lineage>
</organism>
<accession>Q1BU67</accession>
<protein>
    <recommendedName>
        <fullName evidence="1">3-deoxy-manno-octulosonate cytidylyltransferase</fullName>
        <ecNumber evidence="1">2.7.7.38</ecNumber>
    </recommendedName>
    <alternativeName>
        <fullName evidence="1">CMP-2-keto-3-deoxyoctulosonic acid synthase</fullName>
        <shortName evidence="1">CKS</shortName>
        <shortName evidence="1">CMP-KDO synthase</shortName>
    </alternativeName>
</protein>
<evidence type="ECO:0000255" key="1">
    <source>
        <dbReference type="HAMAP-Rule" id="MF_00057"/>
    </source>
</evidence>
<gene>
    <name evidence="1" type="primary">kdsB</name>
    <name type="ordered locus">Bcen_1935</name>
</gene>
<comment type="function">
    <text evidence="1">Activates KDO (a required 8-carbon sugar) for incorporation into bacterial lipopolysaccharide in Gram-negative bacteria.</text>
</comment>
<comment type="catalytic activity">
    <reaction evidence="1">
        <text>3-deoxy-alpha-D-manno-oct-2-ulosonate + CTP = CMP-3-deoxy-beta-D-manno-octulosonate + diphosphate</text>
        <dbReference type="Rhea" id="RHEA:23448"/>
        <dbReference type="ChEBI" id="CHEBI:33019"/>
        <dbReference type="ChEBI" id="CHEBI:37563"/>
        <dbReference type="ChEBI" id="CHEBI:85986"/>
        <dbReference type="ChEBI" id="CHEBI:85987"/>
        <dbReference type="EC" id="2.7.7.38"/>
    </reaction>
</comment>
<comment type="pathway">
    <text evidence="1">Nucleotide-sugar biosynthesis; CMP-3-deoxy-D-manno-octulosonate biosynthesis; CMP-3-deoxy-D-manno-octulosonate from 3-deoxy-D-manno-octulosonate and CTP: step 1/1.</text>
</comment>
<comment type="pathway">
    <text evidence="1">Bacterial outer membrane biogenesis; lipopolysaccharide biosynthesis.</text>
</comment>
<comment type="subcellular location">
    <subcellularLocation>
        <location evidence="1">Cytoplasm</location>
    </subcellularLocation>
</comment>
<comment type="similarity">
    <text evidence="1">Belongs to the KdsB family.</text>
</comment>
<feature type="chain" id="PRO_0000370023" description="3-deoxy-manno-octulosonate cytidylyltransferase">
    <location>
        <begin position="1"/>
        <end position="263"/>
    </location>
</feature>
<proteinExistence type="inferred from homology"/>
<name>KDSB_BURO1</name>